<gene>
    <name evidence="1" type="primary">ruvA</name>
    <name type="ordered locus">ECUMN_2159</name>
</gene>
<sequence>MIGRLRGIIIEKQPPLVLIEVGGVGYEVHMPMTCFYELPEAGQEAIVFTHFVVREDAQLLYGFNNKQERTLFKELIKTNGVGPKLALAILSGMSAQQFVNAVEREEVGALVKLPGIGKKTAERLIVEMKDRFKGLHGDLFTPAADLVLTSPASPATDDAEQEAVAALVALGYKPQEASRMVSKIARPDASSETLIREALRAAL</sequence>
<keyword id="KW-0963">Cytoplasm</keyword>
<keyword id="KW-0227">DNA damage</keyword>
<keyword id="KW-0233">DNA recombination</keyword>
<keyword id="KW-0234">DNA repair</keyword>
<keyword id="KW-0238">DNA-binding</keyword>
<keyword id="KW-0742">SOS response</keyword>
<accession>B7NBL2</accession>
<feature type="chain" id="PRO_1000195142" description="Holliday junction branch migration complex subunit RuvA">
    <location>
        <begin position="1"/>
        <end position="203"/>
    </location>
</feature>
<feature type="region of interest" description="Domain I" evidence="1">
    <location>
        <begin position="1"/>
        <end position="64"/>
    </location>
</feature>
<feature type="region of interest" description="Domain II" evidence="1">
    <location>
        <begin position="65"/>
        <end position="142"/>
    </location>
</feature>
<feature type="region of interest" description="Flexible linker" evidence="1">
    <location>
        <begin position="143"/>
        <end position="154"/>
    </location>
</feature>
<feature type="region of interest" description="Domain III" evidence="1">
    <location>
        <begin position="155"/>
        <end position="203"/>
    </location>
</feature>
<comment type="function">
    <text evidence="1">The RuvA-RuvB-RuvC complex processes Holliday junction (HJ) DNA during genetic recombination and DNA repair, while the RuvA-RuvB complex plays an important role in the rescue of blocked DNA replication forks via replication fork reversal (RFR). RuvA specifically binds to HJ cruciform DNA, conferring on it an open structure. The RuvB hexamer acts as an ATP-dependent pump, pulling dsDNA into and through the RuvAB complex. HJ branch migration allows RuvC to scan DNA until it finds its consensus sequence, where it cleaves and resolves the cruciform DNA.</text>
</comment>
<comment type="subunit">
    <text evidence="1">Homotetramer. Forms an RuvA(8)-RuvB(12)-Holliday junction (HJ) complex. HJ DNA is sandwiched between 2 RuvA tetramers; dsDNA enters through RuvA and exits via RuvB. An RuvB hexamer assembles on each DNA strand where it exits the tetramer. Each RuvB hexamer is contacted by two RuvA subunits (via domain III) on 2 adjacent RuvB subunits; this complex drives branch migration. In the full resolvosome a probable DNA-RuvA(4)-RuvB(12)-RuvC(2) complex forms which resolves the HJ.</text>
</comment>
<comment type="subcellular location">
    <subcellularLocation>
        <location evidence="1">Cytoplasm</location>
    </subcellularLocation>
</comment>
<comment type="domain">
    <text evidence="1">Has three domains with a flexible linker between the domains II and III and assumes an 'L' shape. Domain III is highly mobile and contacts RuvB.</text>
</comment>
<comment type="similarity">
    <text evidence="1">Belongs to the RuvA family.</text>
</comment>
<name>RUVA_ECOLU</name>
<evidence type="ECO:0000255" key="1">
    <source>
        <dbReference type="HAMAP-Rule" id="MF_00031"/>
    </source>
</evidence>
<protein>
    <recommendedName>
        <fullName evidence="1">Holliday junction branch migration complex subunit RuvA</fullName>
    </recommendedName>
</protein>
<organism>
    <name type="scientific">Escherichia coli O17:K52:H18 (strain UMN026 / ExPEC)</name>
    <dbReference type="NCBI Taxonomy" id="585056"/>
    <lineage>
        <taxon>Bacteria</taxon>
        <taxon>Pseudomonadati</taxon>
        <taxon>Pseudomonadota</taxon>
        <taxon>Gammaproteobacteria</taxon>
        <taxon>Enterobacterales</taxon>
        <taxon>Enterobacteriaceae</taxon>
        <taxon>Escherichia</taxon>
    </lineage>
</organism>
<dbReference type="EMBL" id="CU928163">
    <property type="protein sequence ID" value="CAR13352.1"/>
    <property type="molecule type" value="Genomic_DNA"/>
</dbReference>
<dbReference type="RefSeq" id="WP_000580323.1">
    <property type="nucleotide sequence ID" value="NC_011751.1"/>
</dbReference>
<dbReference type="RefSeq" id="YP_002412881.1">
    <property type="nucleotide sequence ID" value="NC_011751.1"/>
</dbReference>
<dbReference type="SMR" id="B7NBL2"/>
<dbReference type="STRING" id="585056.ECUMN_2159"/>
<dbReference type="GeneID" id="75057740"/>
<dbReference type="KEGG" id="eum:ECUMN_2159"/>
<dbReference type="PATRIC" id="fig|585056.7.peg.2344"/>
<dbReference type="HOGENOM" id="CLU_087936_0_0_6"/>
<dbReference type="Proteomes" id="UP000007097">
    <property type="component" value="Chromosome"/>
</dbReference>
<dbReference type="GO" id="GO:0005737">
    <property type="term" value="C:cytoplasm"/>
    <property type="evidence" value="ECO:0007669"/>
    <property type="project" value="UniProtKB-SubCell"/>
</dbReference>
<dbReference type="GO" id="GO:0009379">
    <property type="term" value="C:Holliday junction helicase complex"/>
    <property type="evidence" value="ECO:0007669"/>
    <property type="project" value="InterPro"/>
</dbReference>
<dbReference type="GO" id="GO:0048476">
    <property type="term" value="C:Holliday junction resolvase complex"/>
    <property type="evidence" value="ECO:0007669"/>
    <property type="project" value="UniProtKB-UniRule"/>
</dbReference>
<dbReference type="GO" id="GO:0005524">
    <property type="term" value="F:ATP binding"/>
    <property type="evidence" value="ECO:0007669"/>
    <property type="project" value="InterPro"/>
</dbReference>
<dbReference type="GO" id="GO:0000400">
    <property type="term" value="F:four-way junction DNA binding"/>
    <property type="evidence" value="ECO:0007669"/>
    <property type="project" value="UniProtKB-UniRule"/>
</dbReference>
<dbReference type="GO" id="GO:0009378">
    <property type="term" value="F:four-way junction helicase activity"/>
    <property type="evidence" value="ECO:0007669"/>
    <property type="project" value="InterPro"/>
</dbReference>
<dbReference type="GO" id="GO:0006310">
    <property type="term" value="P:DNA recombination"/>
    <property type="evidence" value="ECO:0007669"/>
    <property type="project" value="UniProtKB-UniRule"/>
</dbReference>
<dbReference type="GO" id="GO:0006281">
    <property type="term" value="P:DNA repair"/>
    <property type="evidence" value="ECO:0007669"/>
    <property type="project" value="UniProtKB-UniRule"/>
</dbReference>
<dbReference type="GO" id="GO:0009432">
    <property type="term" value="P:SOS response"/>
    <property type="evidence" value="ECO:0007669"/>
    <property type="project" value="UniProtKB-UniRule"/>
</dbReference>
<dbReference type="CDD" id="cd14332">
    <property type="entry name" value="UBA_RuvA_C"/>
    <property type="match status" value="1"/>
</dbReference>
<dbReference type="FunFam" id="1.10.150.20:FF:000012">
    <property type="entry name" value="Holliday junction ATP-dependent DNA helicase RuvA"/>
    <property type="match status" value="1"/>
</dbReference>
<dbReference type="FunFam" id="1.10.8.10:FF:000008">
    <property type="entry name" value="Holliday junction ATP-dependent DNA helicase RuvA"/>
    <property type="match status" value="1"/>
</dbReference>
<dbReference type="FunFam" id="2.40.50.140:FF:000083">
    <property type="entry name" value="Holliday junction ATP-dependent DNA helicase RuvA"/>
    <property type="match status" value="1"/>
</dbReference>
<dbReference type="Gene3D" id="1.10.150.20">
    <property type="entry name" value="5' to 3' exonuclease, C-terminal subdomain"/>
    <property type="match status" value="1"/>
</dbReference>
<dbReference type="Gene3D" id="1.10.8.10">
    <property type="entry name" value="DNA helicase RuvA subunit, C-terminal domain"/>
    <property type="match status" value="1"/>
</dbReference>
<dbReference type="Gene3D" id="2.40.50.140">
    <property type="entry name" value="Nucleic acid-binding proteins"/>
    <property type="match status" value="1"/>
</dbReference>
<dbReference type="HAMAP" id="MF_00031">
    <property type="entry name" value="DNA_HJ_migration_RuvA"/>
    <property type="match status" value="1"/>
</dbReference>
<dbReference type="InterPro" id="IPR013849">
    <property type="entry name" value="DNA_helicase_Holl-junc_RuvA_I"/>
</dbReference>
<dbReference type="InterPro" id="IPR003583">
    <property type="entry name" value="Hlx-hairpin-Hlx_DNA-bd_motif"/>
</dbReference>
<dbReference type="InterPro" id="IPR012340">
    <property type="entry name" value="NA-bd_OB-fold"/>
</dbReference>
<dbReference type="InterPro" id="IPR000085">
    <property type="entry name" value="RuvA"/>
</dbReference>
<dbReference type="InterPro" id="IPR010994">
    <property type="entry name" value="RuvA_2-like"/>
</dbReference>
<dbReference type="InterPro" id="IPR011114">
    <property type="entry name" value="RuvA_C"/>
</dbReference>
<dbReference type="InterPro" id="IPR036267">
    <property type="entry name" value="RuvA_C_sf"/>
</dbReference>
<dbReference type="NCBIfam" id="TIGR00084">
    <property type="entry name" value="ruvA"/>
    <property type="match status" value="1"/>
</dbReference>
<dbReference type="Pfam" id="PF14520">
    <property type="entry name" value="HHH_5"/>
    <property type="match status" value="1"/>
</dbReference>
<dbReference type="Pfam" id="PF07499">
    <property type="entry name" value="RuvA_C"/>
    <property type="match status" value="1"/>
</dbReference>
<dbReference type="Pfam" id="PF01330">
    <property type="entry name" value="RuvA_N"/>
    <property type="match status" value="1"/>
</dbReference>
<dbReference type="SMART" id="SM00278">
    <property type="entry name" value="HhH1"/>
    <property type="match status" value="2"/>
</dbReference>
<dbReference type="SUPFAM" id="SSF46929">
    <property type="entry name" value="DNA helicase RuvA subunit, C-terminal domain"/>
    <property type="match status" value="1"/>
</dbReference>
<dbReference type="SUPFAM" id="SSF50249">
    <property type="entry name" value="Nucleic acid-binding proteins"/>
    <property type="match status" value="1"/>
</dbReference>
<dbReference type="SUPFAM" id="SSF47781">
    <property type="entry name" value="RuvA domain 2-like"/>
    <property type="match status" value="1"/>
</dbReference>
<proteinExistence type="inferred from homology"/>
<reference key="1">
    <citation type="journal article" date="2009" name="PLoS Genet.">
        <title>Organised genome dynamics in the Escherichia coli species results in highly diverse adaptive paths.</title>
        <authorList>
            <person name="Touchon M."/>
            <person name="Hoede C."/>
            <person name="Tenaillon O."/>
            <person name="Barbe V."/>
            <person name="Baeriswyl S."/>
            <person name="Bidet P."/>
            <person name="Bingen E."/>
            <person name="Bonacorsi S."/>
            <person name="Bouchier C."/>
            <person name="Bouvet O."/>
            <person name="Calteau A."/>
            <person name="Chiapello H."/>
            <person name="Clermont O."/>
            <person name="Cruveiller S."/>
            <person name="Danchin A."/>
            <person name="Diard M."/>
            <person name="Dossat C."/>
            <person name="Karoui M.E."/>
            <person name="Frapy E."/>
            <person name="Garry L."/>
            <person name="Ghigo J.M."/>
            <person name="Gilles A.M."/>
            <person name="Johnson J."/>
            <person name="Le Bouguenec C."/>
            <person name="Lescat M."/>
            <person name="Mangenot S."/>
            <person name="Martinez-Jehanne V."/>
            <person name="Matic I."/>
            <person name="Nassif X."/>
            <person name="Oztas S."/>
            <person name="Petit M.A."/>
            <person name="Pichon C."/>
            <person name="Rouy Z."/>
            <person name="Ruf C.S."/>
            <person name="Schneider D."/>
            <person name="Tourret J."/>
            <person name="Vacherie B."/>
            <person name="Vallenet D."/>
            <person name="Medigue C."/>
            <person name="Rocha E.P.C."/>
            <person name="Denamur E."/>
        </authorList>
    </citation>
    <scope>NUCLEOTIDE SEQUENCE [LARGE SCALE GENOMIC DNA]</scope>
    <source>
        <strain>UMN026 / ExPEC</strain>
    </source>
</reference>